<protein>
    <recommendedName>
        <fullName>Uncharacterized protein ORF102</fullName>
    </recommendedName>
</protein>
<organism>
    <name type="scientific">Acidianus filamentous virus 1 (isolate United States/Yellowstone)</name>
    <name type="common">AFV-1</name>
    <dbReference type="NCBI Taxonomy" id="654909"/>
    <lineage>
        <taxon>Viruses</taxon>
        <taxon>Adnaviria</taxon>
        <taxon>Zilligvirae</taxon>
        <taxon>Taleaviricota</taxon>
        <taxon>Tokiviricetes</taxon>
        <taxon>Ligamenvirales</taxon>
        <taxon>Ungulaviridae</taxon>
        <taxon>Captovirus</taxon>
        <taxon>Acidianus filamentous virus 1</taxon>
    </lineage>
</organism>
<organismHost>
    <name type="scientific">Acidianus hospitalis</name>
    <dbReference type="NCBI Taxonomy" id="563177"/>
</organismHost>
<organismHost>
    <name type="scientific">Acidianus infernus</name>
    <dbReference type="NCBI Taxonomy" id="12915"/>
</organismHost>
<feature type="chain" id="PRO_0000384551" description="Uncharacterized protein ORF102">
    <location>
        <begin position="1"/>
        <end position="102"/>
    </location>
</feature>
<feature type="strand" evidence="1">
    <location>
        <begin position="5"/>
        <end position="11"/>
    </location>
</feature>
<feature type="helix" evidence="1">
    <location>
        <begin position="12"/>
        <end position="24"/>
    </location>
</feature>
<feature type="turn" evidence="1">
    <location>
        <begin position="25"/>
        <end position="27"/>
    </location>
</feature>
<feature type="strand" evidence="1">
    <location>
        <begin position="28"/>
        <end position="33"/>
    </location>
</feature>
<feature type="strand" evidence="1">
    <location>
        <begin position="36"/>
        <end position="44"/>
    </location>
</feature>
<feature type="helix" evidence="1">
    <location>
        <begin position="47"/>
        <end position="51"/>
    </location>
</feature>
<feature type="strand" evidence="1">
    <location>
        <begin position="55"/>
        <end position="58"/>
    </location>
</feature>
<feature type="strand" evidence="1">
    <location>
        <begin position="61"/>
        <end position="65"/>
    </location>
</feature>
<feature type="helix" evidence="1">
    <location>
        <begin position="66"/>
        <end position="73"/>
    </location>
</feature>
<feature type="helix" evidence="1">
    <location>
        <begin position="75"/>
        <end position="79"/>
    </location>
</feature>
<feature type="strand" evidence="1">
    <location>
        <begin position="81"/>
        <end position="85"/>
    </location>
</feature>
<feature type="strand" evidence="1">
    <location>
        <begin position="87"/>
        <end position="94"/>
    </location>
</feature>
<dbReference type="EMBL" id="AJ567472">
    <property type="protein sequence ID" value="CAD98957.1"/>
    <property type="molecule type" value="Genomic_DNA"/>
</dbReference>
<dbReference type="RefSeq" id="YP_003753.1">
    <property type="nucleotide sequence ID" value="NC_005830.1"/>
</dbReference>
<dbReference type="PDB" id="2WB6">
    <property type="method" value="X-ray"/>
    <property type="resolution" value="1.95 A"/>
    <property type="chains" value="A=2-102"/>
</dbReference>
<dbReference type="PDBsum" id="2WB6"/>
<dbReference type="SMR" id="Q70LC3"/>
<dbReference type="KEGG" id="vg:2769166"/>
<dbReference type="EvolutionaryTrace" id="Q70LC3"/>
<dbReference type="Proteomes" id="UP000000514">
    <property type="component" value="Genome"/>
</dbReference>
<dbReference type="Gene3D" id="3.90.1150.90">
    <property type="match status" value="1"/>
</dbReference>
<name>Y102_AFV1Y</name>
<keyword id="KW-0002">3D-structure</keyword>
<keyword id="KW-1185">Reference proteome</keyword>
<accession>Q70LC3</accession>
<reference key="1">
    <citation type="journal article" date="2003" name="Virology">
        <title>AFV1, a novel virus infecting hyperthermophilic archaea of the genus acidianus.</title>
        <authorList>
            <person name="Bettstetter M."/>
            <person name="Peng X."/>
            <person name="Garrett R.A."/>
            <person name="Prangishvili D."/>
        </authorList>
    </citation>
    <scope>NUCLEOTIDE SEQUENCE [GENOMIC DNA]</scope>
</reference>
<reference key="2">
    <citation type="journal article" date="2009" name="Protein Sci.">
        <title>Crystal structure of AFV1-102, a protein from the acidianus filamentous virus 1.</title>
        <authorList>
            <person name="Keller J."/>
            <person name="Leulliot N."/>
            <person name="Collinet B."/>
            <person name="Campanacci V."/>
            <person name="Cambillau C."/>
            <person name="Pranghisvilli D."/>
            <person name="van Tilbeurgh H."/>
        </authorList>
    </citation>
    <scope>X-RAY CRYSTALLOGRAPHY (1.95 ANGSTROMS) OF 2-102</scope>
</reference>
<sequence length="102" mass="11670">MIVDKNKIVIPMSEFLDSMFLVIEKLGVHAEKKGSMIFLSSERVKLADWKQLGAMCSDCYHCKLPLSSFIEIVTRKAKDKFLVMYNEKEVTLVARGVQTIQK</sequence>
<proteinExistence type="evidence at protein level"/>
<evidence type="ECO:0007829" key="1">
    <source>
        <dbReference type="PDB" id="2WB6"/>
    </source>
</evidence>
<gene>
    <name type="ORF">ORF102</name>
</gene>